<gene>
    <name evidence="1" type="primary">rlmH</name>
    <name type="ordered locus">SPCG_2204</name>
</gene>
<name>RLMH_STRPS</name>
<comment type="function">
    <text evidence="1">Specifically methylates the pseudouridine at position 1915 (m3Psi1915) in 23S rRNA.</text>
</comment>
<comment type="catalytic activity">
    <reaction evidence="1">
        <text>pseudouridine(1915) in 23S rRNA + S-adenosyl-L-methionine = N(3)-methylpseudouridine(1915) in 23S rRNA + S-adenosyl-L-homocysteine + H(+)</text>
        <dbReference type="Rhea" id="RHEA:42752"/>
        <dbReference type="Rhea" id="RHEA-COMP:10221"/>
        <dbReference type="Rhea" id="RHEA-COMP:10222"/>
        <dbReference type="ChEBI" id="CHEBI:15378"/>
        <dbReference type="ChEBI" id="CHEBI:57856"/>
        <dbReference type="ChEBI" id="CHEBI:59789"/>
        <dbReference type="ChEBI" id="CHEBI:65314"/>
        <dbReference type="ChEBI" id="CHEBI:74486"/>
        <dbReference type="EC" id="2.1.1.177"/>
    </reaction>
</comment>
<comment type="subunit">
    <text evidence="1">Homodimer.</text>
</comment>
<comment type="subcellular location">
    <subcellularLocation>
        <location evidence="1">Cytoplasm</location>
    </subcellularLocation>
</comment>
<comment type="similarity">
    <text evidence="1">Belongs to the RNA methyltransferase RlmH family.</text>
</comment>
<reference key="1">
    <citation type="journal article" date="2009" name="BMC Genomics">
        <title>Genome evolution driven by host adaptations results in a more virulent and antimicrobial-resistant Streptococcus pneumoniae serotype 14.</title>
        <authorList>
            <person name="Ding F."/>
            <person name="Tang P."/>
            <person name="Hsu M.-H."/>
            <person name="Cui P."/>
            <person name="Hu S."/>
            <person name="Yu J."/>
            <person name="Chiu C.-H."/>
        </authorList>
    </citation>
    <scope>NUCLEOTIDE SEQUENCE [LARGE SCALE GENOMIC DNA]</scope>
    <source>
        <strain>CGSP14</strain>
    </source>
</reference>
<protein>
    <recommendedName>
        <fullName evidence="1">Ribosomal RNA large subunit methyltransferase H</fullName>
        <ecNumber evidence="1">2.1.1.177</ecNumber>
    </recommendedName>
    <alternativeName>
        <fullName evidence="1">23S rRNA (pseudouridine1915-N3)-methyltransferase</fullName>
    </alternativeName>
    <alternativeName>
        <fullName evidence="1">23S rRNA m3Psi1915 methyltransferase</fullName>
    </alternativeName>
    <alternativeName>
        <fullName evidence="1">rRNA (pseudouridine-N3-)-methyltransferase RlmH</fullName>
    </alternativeName>
</protein>
<evidence type="ECO:0000255" key="1">
    <source>
        <dbReference type="HAMAP-Rule" id="MF_00658"/>
    </source>
</evidence>
<proteinExistence type="inferred from homology"/>
<keyword id="KW-0963">Cytoplasm</keyword>
<keyword id="KW-0489">Methyltransferase</keyword>
<keyword id="KW-0698">rRNA processing</keyword>
<keyword id="KW-0949">S-adenosyl-L-methionine</keyword>
<keyword id="KW-0808">Transferase</keyword>
<sequence length="159" mass="18099">MKIKVVTVGKLKEKYLKDGIAEYSKRISRFAKFEMIELSDEKTPDKASESENQKILEIEGQRILSKIADRDFVIVLAIEGKTFFSEEFSKQLEETSIKGFSTLTFIIGGSLGLSSSVKNRANLSVSFGRLTLPHQLMRLVLVEQIYRAFTIQQGFPYHK</sequence>
<dbReference type="EC" id="2.1.1.177" evidence="1"/>
<dbReference type="EMBL" id="CP001033">
    <property type="protein sequence ID" value="ACB91456.1"/>
    <property type="molecule type" value="Genomic_DNA"/>
</dbReference>
<dbReference type="RefSeq" id="WP_000695929.1">
    <property type="nucleotide sequence ID" value="NC_010582.1"/>
</dbReference>
<dbReference type="SMR" id="B2INZ9"/>
<dbReference type="GeneID" id="45652538"/>
<dbReference type="KEGG" id="spw:SPCG_2204"/>
<dbReference type="HOGENOM" id="CLU_100552_0_0_9"/>
<dbReference type="GO" id="GO:0005737">
    <property type="term" value="C:cytoplasm"/>
    <property type="evidence" value="ECO:0007669"/>
    <property type="project" value="UniProtKB-SubCell"/>
</dbReference>
<dbReference type="GO" id="GO:0070038">
    <property type="term" value="F:rRNA (pseudouridine-N3-)-methyltransferase activity"/>
    <property type="evidence" value="ECO:0007669"/>
    <property type="project" value="UniProtKB-UniRule"/>
</dbReference>
<dbReference type="CDD" id="cd18081">
    <property type="entry name" value="RlmH-like"/>
    <property type="match status" value="1"/>
</dbReference>
<dbReference type="Gene3D" id="3.40.1280.10">
    <property type="match status" value="1"/>
</dbReference>
<dbReference type="HAMAP" id="MF_00658">
    <property type="entry name" value="23SrRNA_methyltr_H"/>
    <property type="match status" value="1"/>
</dbReference>
<dbReference type="InterPro" id="IPR029028">
    <property type="entry name" value="Alpha/beta_knot_MTases"/>
</dbReference>
<dbReference type="InterPro" id="IPR003742">
    <property type="entry name" value="RlmH-like"/>
</dbReference>
<dbReference type="InterPro" id="IPR029026">
    <property type="entry name" value="tRNA_m1G_MTases_N"/>
</dbReference>
<dbReference type="NCBIfam" id="NF000985">
    <property type="entry name" value="PRK00103.1-3"/>
    <property type="match status" value="1"/>
</dbReference>
<dbReference type="NCBIfam" id="TIGR00246">
    <property type="entry name" value="tRNA_RlmH_YbeA"/>
    <property type="match status" value="1"/>
</dbReference>
<dbReference type="PANTHER" id="PTHR33603">
    <property type="entry name" value="METHYLTRANSFERASE"/>
    <property type="match status" value="1"/>
</dbReference>
<dbReference type="PANTHER" id="PTHR33603:SF1">
    <property type="entry name" value="RIBOSOMAL RNA LARGE SUBUNIT METHYLTRANSFERASE H"/>
    <property type="match status" value="1"/>
</dbReference>
<dbReference type="Pfam" id="PF02590">
    <property type="entry name" value="SPOUT_MTase"/>
    <property type="match status" value="1"/>
</dbReference>
<dbReference type="PIRSF" id="PIRSF004505">
    <property type="entry name" value="MT_bac"/>
    <property type="match status" value="1"/>
</dbReference>
<dbReference type="SUPFAM" id="SSF75217">
    <property type="entry name" value="alpha/beta knot"/>
    <property type="match status" value="1"/>
</dbReference>
<organism>
    <name type="scientific">Streptococcus pneumoniae (strain CGSP14)</name>
    <dbReference type="NCBI Taxonomy" id="516950"/>
    <lineage>
        <taxon>Bacteria</taxon>
        <taxon>Bacillati</taxon>
        <taxon>Bacillota</taxon>
        <taxon>Bacilli</taxon>
        <taxon>Lactobacillales</taxon>
        <taxon>Streptococcaceae</taxon>
        <taxon>Streptococcus</taxon>
    </lineage>
</organism>
<feature type="chain" id="PRO_0000366661" description="Ribosomal RNA large subunit methyltransferase H">
    <location>
        <begin position="1"/>
        <end position="159"/>
    </location>
</feature>
<feature type="binding site" evidence="1">
    <location>
        <position position="76"/>
    </location>
    <ligand>
        <name>S-adenosyl-L-methionine</name>
        <dbReference type="ChEBI" id="CHEBI:59789"/>
    </ligand>
</feature>
<feature type="binding site" evidence="1">
    <location>
        <position position="108"/>
    </location>
    <ligand>
        <name>S-adenosyl-L-methionine</name>
        <dbReference type="ChEBI" id="CHEBI:59789"/>
    </ligand>
</feature>
<feature type="binding site" evidence="1">
    <location>
        <begin position="127"/>
        <end position="132"/>
    </location>
    <ligand>
        <name>S-adenosyl-L-methionine</name>
        <dbReference type="ChEBI" id="CHEBI:59789"/>
    </ligand>
</feature>
<accession>B2INZ9</accession>